<accession>A1AU69</accession>
<feature type="chain" id="PRO_0000387024" description="Ribosomal RNA small subunit methyltransferase H">
    <location>
        <begin position="1"/>
        <end position="313"/>
    </location>
</feature>
<feature type="binding site" evidence="1">
    <location>
        <begin position="34"/>
        <end position="36"/>
    </location>
    <ligand>
        <name>S-adenosyl-L-methionine</name>
        <dbReference type="ChEBI" id="CHEBI:59789"/>
    </ligand>
</feature>
<feature type="binding site" evidence="1">
    <location>
        <position position="55"/>
    </location>
    <ligand>
        <name>S-adenosyl-L-methionine</name>
        <dbReference type="ChEBI" id="CHEBI:59789"/>
    </ligand>
</feature>
<feature type="binding site" evidence="1">
    <location>
        <position position="82"/>
    </location>
    <ligand>
        <name>S-adenosyl-L-methionine</name>
        <dbReference type="ChEBI" id="CHEBI:59789"/>
    </ligand>
</feature>
<feature type="binding site" evidence="1">
    <location>
        <position position="103"/>
    </location>
    <ligand>
        <name>S-adenosyl-L-methionine</name>
        <dbReference type="ChEBI" id="CHEBI:59789"/>
    </ligand>
</feature>
<feature type="binding site" evidence="1">
    <location>
        <position position="110"/>
    </location>
    <ligand>
        <name>S-adenosyl-L-methionine</name>
        <dbReference type="ChEBI" id="CHEBI:59789"/>
    </ligand>
</feature>
<gene>
    <name evidence="1" type="primary">rsmH</name>
    <name type="synonym">mraW</name>
    <name type="ordered locus">Ppro_3297</name>
</gene>
<dbReference type="EC" id="2.1.1.199" evidence="1"/>
<dbReference type="EMBL" id="CP000482">
    <property type="protein sequence ID" value="ABL00890.1"/>
    <property type="molecule type" value="Genomic_DNA"/>
</dbReference>
<dbReference type="RefSeq" id="WP_011737107.1">
    <property type="nucleotide sequence ID" value="NC_008609.1"/>
</dbReference>
<dbReference type="SMR" id="A1AU69"/>
<dbReference type="STRING" id="338966.Ppro_3297"/>
<dbReference type="KEGG" id="ppd:Ppro_3297"/>
<dbReference type="eggNOG" id="COG0275">
    <property type="taxonomic scope" value="Bacteria"/>
</dbReference>
<dbReference type="HOGENOM" id="CLU_038422_2_0_7"/>
<dbReference type="OrthoDB" id="9806637at2"/>
<dbReference type="Proteomes" id="UP000006732">
    <property type="component" value="Chromosome"/>
</dbReference>
<dbReference type="GO" id="GO:0005737">
    <property type="term" value="C:cytoplasm"/>
    <property type="evidence" value="ECO:0007669"/>
    <property type="project" value="UniProtKB-SubCell"/>
</dbReference>
<dbReference type="GO" id="GO:0071424">
    <property type="term" value="F:rRNA (cytosine-N4-)-methyltransferase activity"/>
    <property type="evidence" value="ECO:0007669"/>
    <property type="project" value="UniProtKB-UniRule"/>
</dbReference>
<dbReference type="GO" id="GO:0070475">
    <property type="term" value="P:rRNA base methylation"/>
    <property type="evidence" value="ECO:0007669"/>
    <property type="project" value="UniProtKB-UniRule"/>
</dbReference>
<dbReference type="FunFam" id="1.10.150.170:FF:000003">
    <property type="entry name" value="Ribosomal RNA small subunit methyltransferase H"/>
    <property type="match status" value="1"/>
</dbReference>
<dbReference type="Gene3D" id="1.10.150.170">
    <property type="entry name" value="Putative methyltransferase TM0872, insert domain"/>
    <property type="match status" value="1"/>
</dbReference>
<dbReference type="Gene3D" id="3.40.50.150">
    <property type="entry name" value="Vaccinia Virus protein VP39"/>
    <property type="match status" value="1"/>
</dbReference>
<dbReference type="HAMAP" id="MF_01007">
    <property type="entry name" value="16SrRNA_methyltr_H"/>
    <property type="match status" value="1"/>
</dbReference>
<dbReference type="InterPro" id="IPR002903">
    <property type="entry name" value="RsmH"/>
</dbReference>
<dbReference type="InterPro" id="IPR023397">
    <property type="entry name" value="SAM-dep_MeTrfase_MraW_recog"/>
</dbReference>
<dbReference type="InterPro" id="IPR029063">
    <property type="entry name" value="SAM-dependent_MTases_sf"/>
</dbReference>
<dbReference type="NCBIfam" id="TIGR00006">
    <property type="entry name" value="16S rRNA (cytosine(1402)-N(4))-methyltransferase RsmH"/>
    <property type="match status" value="1"/>
</dbReference>
<dbReference type="PANTHER" id="PTHR11265:SF0">
    <property type="entry name" value="12S RRNA N4-METHYLCYTIDINE METHYLTRANSFERASE"/>
    <property type="match status" value="1"/>
</dbReference>
<dbReference type="PANTHER" id="PTHR11265">
    <property type="entry name" value="S-ADENOSYL-METHYLTRANSFERASE MRAW"/>
    <property type="match status" value="1"/>
</dbReference>
<dbReference type="Pfam" id="PF01795">
    <property type="entry name" value="Methyltransf_5"/>
    <property type="match status" value="1"/>
</dbReference>
<dbReference type="PIRSF" id="PIRSF004486">
    <property type="entry name" value="MraW"/>
    <property type="match status" value="1"/>
</dbReference>
<dbReference type="SUPFAM" id="SSF81799">
    <property type="entry name" value="Putative methyltransferase TM0872, insert domain"/>
    <property type="match status" value="1"/>
</dbReference>
<dbReference type="SUPFAM" id="SSF53335">
    <property type="entry name" value="S-adenosyl-L-methionine-dependent methyltransferases"/>
    <property type="match status" value="1"/>
</dbReference>
<proteinExistence type="inferred from homology"/>
<evidence type="ECO:0000255" key="1">
    <source>
        <dbReference type="HAMAP-Rule" id="MF_01007"/>
    </source>
</evidence>
<keyword id="KW-0963">Cytoplasm</keyword>
<keyword id="KW-0489">Methyltransferase</keyword>
<keyword id="KW-1185">Reference proteome</keyword>
<keyword id="KW-0698">rRNA processing</keyword>
<keyword id="KW-0949">S-adenosyl-L-methionine</keyword>
<keyword id="KW-0808">Transferase</keyword>
<reference key="1">
    <citation type="submission" date="2006-10" db="EMBL/GenBank/DDBJ databases">
        <title>Complete sequence of chromosome of Pelobacter propionicus DSM 2379.</title>
        <authorList>
            <consortium name="US DOE Joint Genome Institute"/>
            <person name="Copeland A."/>
            <person name="Lucas S."/>
            <person name="Lapidus A."/>
            <person name="Barry K."/>
            <person name="Detter J.C."/>
            <person name="Glavina del Rio T."/>
            <person name="Hammon N."/>
            <person name="Israni S."/>
            <person name="Dalin E."/>
            <person name="Tice H."/>
            <person name="Pitluck S."/>
            <person name="Saunders E."/>
            <person name="Brettin T."/>
            <person name="Bruce D."/>
            <person name="Han C."/>
            <person name="Tapia R."/>
            <person name="Schmutz J."/>
            <person name="Larimer F."/>
            <person name="Land M."/>
            <person name="Hauser L."/>
            <person name="Kyrpides N."/>
            <person name="Kim E."/>
            <person name="Lovley D."/>
            <person name="Richardson P."/>
        </authorList>
    </citation>
    <scope>NUCLEOTIDE SEQUENCE [LARGE SCALE GENOMIC DNA]</scope>
    <source>
        <strain>DSM 2379 / NBRC 103807 / OttBd1</strain>
    </source>
</reference>
<organism>
    <name type="scientific">Pelobacter propionicus (strain DSM 2379 / NBRC 103807 / OttBd1)</name>
    <dbReference type="NCBI Taxonomy" id="338966"/>
    <lineage>
        <taxon>Bacteria</taxon>
        <taxon>Pseudomonadati</taxon>
        <taxon>Thermodesulfobacteriota</taxon>
        <taxon>Desulfuromonadia</taxon>
        <taxon>Desulfuromonadales</taxon>
        <taxon>Desulfuromonadaceae</taxon>
        <taxon>Pelobacter</taxon>
    </lineage>
</organism>
<comment type="function">
    <text evidence="1">Specifically methylates the N4 position of cytidine in position 1402 (C1402) of 16S rRNA.</text>
</comment>
<comment type="catalytic activity">
    <reaction evidence="1">
        <text>cytidine(1402) in 16S rRNA + S-adenosyl-L-methionine = N(4)-methylcytidine(1402) in 16S rRNA + S-adenosyl-L-homocysteine + H(+)</text>
        <dbReference type="Rhea" id="RHEA:42928"/>
        <dbReference type="Rhea" id="RHEA-COMP:10286"/>
        <dbReference type="Rhea" id="RHEA-COMP:10287"/>
        <dbReference type="ChEBI" id="CHEBI:15378"/>
        <dbReference type="ChEBI" id="CHEBI:57856"/>
        <dbReference type="ChEBI" id="CHEBI:59789"/>
        <dbReference type="ChEBI" id="CHEBI:74506"/>
        <dbReference type="ChEBI" id="CHEBI:82748"/>
        <dbReference type="EC" id="2.1.1.199"/>
    </reaction>
</comment>
<comment type="subcellular location">
    <subcellularLocation>
        <location evidence="1">Cytoplasm</location>
    </subcellularLocation>
</comment>
<comment type="similarity">
    <text evidence="1">Belongs to the methyltransferase superfamily. RsmH family.</text>
</comment>
<sequence>MAGFQHLSVMPEEVLRFLSPRPGGCYLDGTLGGGGHAALVAERCAPGGGTLIGMDRDLEALKAAAERLSRFGDAVRLLHGNFADIATRLDSLGVDALDGFVLDLGVSSHQLDTARRGFSFQQEGALDMRMDGDSGETAADLVNRLPEHELERIIREYGEERWAKRIASFIVRARSEAPIENTLRLVDIIKGAIPKAKWEERLHPATRTFQALRIAVNHELESLERGLKSAIDRLKPGGRGVVISFHSLEDRIVKHVFREYAAGCTCPRNLPVCVCGRQPRVRVLTGRPVTATEEELRDNPRSRSAKLRAVEKL</sequence>
<protein>
    <recommendedName>
        <fullName evidence="1">Ribosomal RNA small subunit methyltransferase H</fullName>
        <ecNumber evidence="1">2.1.1.199</ecNumber>
    </recommendedName>
    <alternativeName>
        <fullName evidence="1">16S rRNA m(4)C1402 methyltransferase</fullName>
    </alternativeName>
    <alternativeName>
        <fullName evidence="1">rRNA (cytosine-N(4)-)-methyltransferase RsmH</fullName>
    </alternativeName>
</protein>
<name>RSMH_PELPD</name>